<name>PDXB_ECO27</name>
<protein>
    <recommendedName>
        <fullName evidence="1">Erythronate-4-phosphate dehydrogenase</fullName>
        <ecNumber evidence="1">1.1.1.290</ecNumber>
    </recommendedName>
</protein>
<organism>
    <name type="scientific">Escherichia coli O127:H6 (strain E2348/69 / EPEC)</name>
    <dbReference type="NCBI Taxonomy" id="574521"/>
    <lineage>
        <taxon>Bacteria</taxon>
        <taxon>Pseudomonadati</taxon>
        <taxon>Pseudomonadota</taxon>
        <taxon>Gammaproteobacteria</taxon>
        <taxon>Enterobacterales</taxon>
        <taxon>Enterobacteriaceae</taxon>
        <taxon>Escherichia</taxon>
    </lineage>
</organism>
<dbReference type="EC" id="1.1.1.290" evidence="1"/>
<dbReference type="EMBL" id="FM180568">
    <property type="protein sequence ID" value="CAS10008.1"/>
    <property type="molecule type" value="Genomic_DNA"/>
</dbReference>
<dbReference type="RefSeq" id="WP_000699119.1">
    <property type="nucleotide sequence ID" value="NC_011601.1"/>
</dbReference>
<dbReference type="SMR" id="B7UFX8"/>
<dbReference type="KEGG" id="ecg:E2348C_2460"/>
<dbReference type="HOGENOM" id="CLU_019796_4_0_6"/>
<dbReference type="UniPathway" id="UPA00244">
    <property type="reaction ID" value="UER00310"/>
</dbReference>
<dbReference type="Proteomes" id="UP000008205">
    <property type="component" value="Chromosome"/>
</dbReference>
<dbReference type="GO" id="GO:0005829">
    <property type="term" value="C:cytosol"/>
    <property type="evidence" value="ECO:0007669"/>
    <property type="project" value="TreeGrafter"/>
</dbReference>
<dbReference type="GO" id="GO:0033711">
    <property type="term" value="F:4-phosphoerythronate dehydrogenase activity"/>
    <property type="evidence" value="ECO:0007669"/>
    <property type="project" value="UniProtKB-EC"/>
</dbReference>
<dbReference type="GO" id="GO:0051287">
    <property type="term" value="F:NAD binding"/>
    <property type="evidence" value="ECO:0007669"/>
    <property type="project" value="InterPro"/>
</dbReference>
<dbReference type="GO" id="GO:0046983">
    <property type="term" value="F:protein dimerization activity"/>
    <property type="evidence" value="ECO:0007669"/>
    <property type="project" value="InterPro"/>
</dbReference>
<dbReference type="GO" id="GO:0036001">
    <property type="term" value="P:'de novo' pyridoxal 5'-phosphate biosynthetic process"/>
    <property type="evidence" value="ECO:0007669"/>
    <property type="project" value="TreeGrafter"/>
</dbReference>
<dbReference type="GO" id="GO:0008615">
    <property type="term" value="P:pyridoxine biosynthetic process"/>
    <property type="evidence" value="ECO:0007669"/>
    <property type="project" value="UniProtKB-UniRule"/>
</dbReference>
<dbReference type="CDD" id="cd12158">
    <property type="entry name" value="ErythrP_dh"/>
    <property type="match status" value="1"/>
</dbReference>
<dbReference type="FunFam" id="3.30.1370.170:FF:000001">
    <property type="entry name" value="Erythronate-4-phosphate dehydrogenase"/>
    <property type="match status" value="1"/>
</dbReference>
<dbReference type="FunFam" id="3.40.50.720:FF:000093">
    <property type="entry name" value="Erythronate-4-phosphate dehydrogenase"/>
    <property type="match status" value="1"/>
</dbReference>
<dbReference type="Gene3D" id="3.30.1370.170">
    <property type="match status" value="1"/>
</dbReference>
<dbReference type="Gene3D" id="3.40.50.720">
    <property type="entry name" value="NAD(P)-binding Rossmann-like Domain"/>
    <property type="match status" value="2"/>
</dbReference>
<dbReference type="HAMAP" id="MF_01825">
    <property type="entry name" value="PdxB"/>
    <property type="match status" value="1"/>
</dbReference>
<dbReference type="InterPro" id="IPR006139">
    <property type="entry name" value="D-isomer_2_OHA_DH_cat_dom"/>
</dbReference>
<dbReference type="InterPro" id="IPR029753">
    <property type="entry name" value="D-isomer_DH_CS"/>
</dbReference>
<dbReference type="InterPro" id="IPR029752">
    <property type="entry name" value="D-isomer_DH_CS1"/>
</dbReference>
<dbReference type="InterPro" id="IPR006140">
    <property type="entry name" value="D-isomer_DH_NAD-bd"/>
</dbReference>
<dbReference type="InterPro" id="IPR020921">
    <property type="entry name" value="Erythronate-4-P_DHase"/>
</dbReference>
<dbReference type="InterPro" id="IPR024531">
    <property type="entry name" value="Erythronate-4-P_DHase_dimer"/>
</dbReference>
<dbReference type="InterPro" id="IPR036291">
    <property type="entry name" value="NAD(P)-bd_dom_sf"/>
</dbReference>
<dbReference type="InterPro" id="IPR038251">
    <property type="entry name" value="PdxB_dimer_sf"/>
</dbReference>
<dbReference type="NCBIfam" id="NF001309">
    <property type="entry name" value="PRK00257.1"/>
    <property type="match status" value="1"/>
</dbReference>
<dbReference type="NCBIfam" id="NF011966">
    <property type="entry name" value="PRK15438.1"/>
    <property type="match status" value="1"/>
</dbReference>
<dbReference type="PANTHER" id="PTHR42938">
    <property type="entry name" value="FORMATE DEHYDROGENASE 1"/>
    <property type="match status" value="1"/>
</dbReference>
<dbReference type="PANTHER" id="PTHR42938:SF9">
    <property type="entry name" value="FORMATE DEHYDROGENASE 1"/>
    <property type="match status" value="1"/>
</dbReference>
<dbReference type="Pfam" id="PF00389">
    <property type="entry name" value="2-Hacid_dh"/>
    <property type="match status" value="1"/>
</dbReference>
<dbReference type="Pfam" id="PF02826">
    <property type="entry name" value="2-Hacid_dh_C"/>
    <property type="match status" value="1"/>
</dbReference>
<dbReference type="Pfam" id="PF11890">
    <property type="entry name" value="DUF3410"/>
    <property type="match status" value="1"/>
</dbReference>
<dbReference type="SUPFAM" id="SSF52283">
    <property type="entry name" value="Formate/glycerate dehydrogenase catalytic domain-like"/>
    <property type="match status" value="1"/>
</dbReference>
<dbReference type="SUPFAM" id="SSF51735">
    <property type="entry name" value="NAD(P)-binding Rossmann-fold domains"/>
    <property type="match status" value="1"/>
</dbReference>
<dbReference type="PROSITE" id="PS00065">
    <property type="entry name" value="D_2_HYDROXYACID_DH_1"/>
    <property type="match status" value="1"/>
</dbReference>
<dbReference type="PROSITE" id="PS00671">
    <property type="entry name" value="D_2_HYDROXYACID_DH_3"/>
    <property type="match status" value="1"/>
</dbReference>
<sequence>MKILVDENMPYARDLFSRLGEVTAVPGRPIPVAQLADADALMVRSVTKVNESLLAGKPIKFVGTATAGTDHVDEAWLKQAGIGFSAAPGCNAIAVVEYVFSSLLMLAERDGFSLHDRTVGIVGVGNVGRRLQARLEALGIKTLLCDPPRADRGDEGDFRSLDELVQHADILTFHTPLFKDGPYKTLHLADEKLIRSLKPGAILINACRGAVVDNTALLTCLNEGQKLSVVLDVWEGEPELNVELLKKVDIGTPHIAGYTLEGKARGTTQVFEAYSKFIGHEQHVALDTLLPATEFGRITLHGPLDQPTLKRLVHLVYDVRRDDAPLRKVAGIPGEFDKLRKNYLERREWSSLYVICDDASAASLLCKLGFNAVHHPAR</sequence>
<comment type="function">
    <text evidence="1">Catalyzes the oxidation of erythronate-4-phosphate to 3-hydroxy-2-oxo-4-phosphonooxybutanoate.</text>
</comment>
<comment type="catalytic activity">
    <reaction evidence="1">
        <text>4-phospho-D-erythronate + NAD(+) = (R)-3-hydroxy-2-oxo-4-phosphooxybutanoate + NADH + H(+)</text>
        <dbReference type="Rhea" id="RHEA:18829"/>
        <dbReference type="ChEBI" id="CHEBI:15378"/>
        <dbReference type="ChEBI" id="CHEBI:57540"/>
        <dbReference type="ChEBI" id="CHEBI:57945"/>
        <dbReference type="ChEBI" id="CHEBI:58538"/>
        <dbReference type="ChEBI" id="CHEBI:58766"/>
        <dbReference type="EC" id="1.1.1.290"/>
    </reaction>
</comment>
<comment type="pathway">
    <text evidence="1">Cofactor biosynthesis; pyridoxine 5'-phosphate biosynthesis; pyridoxine 5'-phosphate from D-erythrose 4-phosphate: step 2/5.</text>
</comment>
<comment type="subunit">
    <text evidence="1">Homodimer.</text>
</comment>
<comment type="subcellular location">
    <subcellularLocation>
        <location evidence="1">Cytoplasm</location>
    </subcellularLocation>
</comment>
<comment type="similarity">
    <text evidence="1">Belongs to the D-isomer specific 2-hydroxyacid dehydrogenase family. PdxB subfamily.</text>
</comment>
<keyword id="KW-0963">Cytoplasm</keyword>
<keyword id="KW-0520">NAD</keyword>
<keyword id="KW-0560">Oxidoreductase</keyword>
<keyword id="KW-0664">Pyridoxine biosynthesis</keyword>
<keyword id="KW-1185">Reference proteome</keyword>
<evidence type="ECO:0000255" key="1">
    <source>
        <dbReference type="HAMAP-Rule" id="MF_01825"/>
    </source>
</evidence>
<reference key="1">
    <citation type="journal article" date="2009" name="J. Bacteriol.">
        <title>Complete genome sequence and comparative genome analysis of enteropathogenic Escherichia coli O127:H6 strain E2348/69.</title>
        <authorList>
            <person name="Iguchi A."/>
            <person name="Thomson N.R."/>
            <person name="Ogura Y."/>
            <person name="Saunders D."/>
            <person name="Ooka T."/>
            <person name="Henderson I.R."/>
            <person name="Harris D."/>
            <person name="Asadulghani M."/>
            <person name="Kurokawa K."/>
            <person name="Dean P."/>
            <person name="Kenny B."/>
            <person name="Quail M.A."/>
            <person name="Thurston S."/>
            <person name="Dougan G."/>
            <person name="Hayashi T."/>
            <person name="Parkhill J."/>
            <person name="Frankel G."/>
        </authorList>
    </citation>
    <scope>NUCLEOTIDE SEQUENCE [LARGE SCALE GENOMIC DNA]</scope>
    <source>
        <strain>E2348/69 / EPEC</strain>
    </source>
</reference>
<gene>
    <name evidence="1" type="primary">pdxB</name>
    <name type="ordered locus">E2348C_2460</name>
</gene>
<proteinExistence type="inferred from homology"/>
<feature type="chain" id="PRO_1000188258" description="Erythronate-4-phosphate dehydrogenase">
    <location>
        <begin position="1"/>
        <end position="378"/>
    </location>
</feature>
<feature type="active site" evidence="1">
    <location>
        <position position="208"/>
    </location>
</feature>
<feature type="active site" evidence="1">
    <location>
        <position position="237"/>
    </location>
</feature>
<feature type="active site" description="Proton donor" evidence="1">
    <location>
        <position position="254"/>
    </location>
</feature>
<feature type="binding site" evidence="1">
    <location>
        <position position="45"/>
    </location>
    <ligand>
        <name>substrate</name>
    </ligand>
</feature>
<feature type="binding site" evidence="1">
    <location>
        <position position="66"/>
    </location>
    <ligand>
        <name>substrate</name>
    </ligand>
</feature>
<feature type="binding site" evidence="1">
    <location>
        <position position="146"/>
    </location>
    <ligand>
        <name>NAD(+)</name>
        <dbReference type="ChEBI" id="CHEBI:57540"/>
    </ligand>
</feature>
<feature type="binding site" evidence="1">
    <location>
        <position position="175"/>
    </location>
    <ligand>
        <name>NAD(+)</name>
        <dbReference type="ChEBI" id="CHEBI:57540"/>
    </ligand>
</feature>
<feature type="binding site" evidence="1">
    <location>
        <position position="232"/>
    </location>
    <ligand>
        <name>NAD(+)</name>
        <dbReference type="ChEBI" id="CHEBI:57540"/>
    </ligand>
</feature>
<feature type="binding site" evidence="1">
    <location>
        <position position="257"/>
    </location>
    <ligand>
        <name>NAD(+)</name>
        <dbReference type="ChEBI" id="CHEBI:57540"/>
    </ligand>
</feature>
<feature type="binding site" evidence="1">
    <location>
        <position position="258"/>
    </location>
    <ligand>
        <name>substrate</name>
    </ligand>
</feature>
<accession>B7UFX8</accession>